<name>ENO_MESH7</name>
<keyword id="KW-0963">Cytoplasm</keyword>
<keyword id="KW-0324">Glycolysis</keyword>
<keyword id="KW-0456">Lyase</keyword>
<keyword id="KW-0460">Magnesium</keyword>
<keyword id="KW-0479">Metal-binding</keyword>
<keyword id="KW-0964">Secreted</keyword>
<feature type="chain" id="PRO_0000267058" description="Enolase">
    <location>
        <begin position="1"/>
        <end position="452"/>
    </location>
</feature>
<feature type="active site" description="Proton donor" evidence="1">
    <location>
        <position position="209"/>
    </location>
</feature>
<feature type="active site" description="Proton acceptor" evidence="1">
    <location>
        <position position="359"/>
    </location>
</feature>
<feature type="binding site" evidence="1">
    <location>
        <position position="167"/>
    </location>
    <ligand>
        <name>(2R)-2-phosphoglycerate</name>
        <dbReference type="ChEBI" id="CHEBI:58289"/>
    </ligand>
</feature>
<feature type="binding site" evidence="1">
    <location>
        <position position="250"/>
    </location>
    <ligand>
        <name>Mg(2+)</name>
        <dbReference type="ChEBI" id="CHEBI:18420"/>
    </ligand>
</feature>
<feature type="binding site" evidence="1">
    <location>
        <position position="307"/>
    </location>
    <ligand>
        <name>Mg(2+)</name>
        <dbReference type="ChEBI" id="CHEBI:18420"/>
    </ligand>
</feature>
<feature type="binding site" evidence="1">
    <location>
        <position position="334"/>
    </location>
    <ligand>
        <name>Mg(2+)</name>
        <dbReference type="ChEBI" id="CHEBI:18420"/>
    </ligand>
</feature>
<feature type="binding site" evidence="1">
    <location>
        <position position="359"/>
    </location>
    <ligand>
        <name>(2R)-2-phosphoglycerate</name>
        <dbReference type="ChEBI" id="CHEBI:58289"/>
    </ligand>
</feature>
<feature type="binding site" evidence="1">
    <location>
        <position position="388"/>
    </location>
    <ligand>
        <name>(2R)-2-phosphoglycerate</name>
        <dbReference type="ChEBI" id="CHEBI:58289"/>
    </ligand>
</feature>
<feature type="binding site" evidence="1">
    <location>
        <position position="389"/>
    </location>
    <ligand>
        <name>(2R)-2-phosphoglycerate</name>
        <dbReference type="ChEBI" id="CHEBI:58289"/>
    </ligand>
</feature>
<feature type="binding site" evidence="1">
    <location>
        <position position="410"/>
    </location>
    <ligand>
        <name>(2R)-2-phosphoglycerate</name>
        <dbReference type="ChEBI" id="CHEBI:58289"/>
    </ligand>
</feature>
<reference key="1">
    <citation type="journal article" date="2005" name="J. Bacteriol.">
        <title>Swine and poultry pathogens: the complete genome sequences of two strains of Mycoplasma hyopneumoniae and a strain of Mycoplasma synoviae.</title>
        <authorList>
            <person name="Vasconcelos A.T.R."/>
            <person name="Ferreira H.B."/>
            <person name="Bizarro C.V."/>
            <person name="Bonatto S.L."/>
            <person name="Carvalho M.O."/>
            <person name="Pinto P.M."/>
            <person name="Almeida D.F."/>
            <person name="Almeida L.G.P."/>
            <person name="Almeida R."/>
            <person name="Alves-Junior L."/>
            <person name="Assuncao E.N."/>
            <person name="Azevedo V.A.C."/>
            <person name="Bogo M.R."/>
            <person name="Brigido M.M."/>
            <person name="Brocchi M."/>
            <person name="Burity H.A."/>
            <person name="Camargo A.A."/>
            <person name="Camargo S.S."/>
            <person name="Carepo M.S."/>
            <person name="Carraro D.M."/>
            <person name="de Mattos Cascardo J.C."/>
            <person name="Castro L.A."/>
            <person name="Cavalcanti G."/>
            <person name="Chemale G."/>
            <person name="Collevatti R.G."/>
            <person name="Cunha C.W."/>
            <person name="Dallagiovanna B."/>
            <person name="Dambros B.P."/>
            <person name="Dellagostin O.A."/>
            <person name="Falcao C."/>
            <person name="Fantinatti-Garboggini F."/>
            <person name="Felipe M.S.S."/>
            <person name="Fiorentin L."/>
            <person name="Franco G.R."/>
            <person name="Freitas N.S.A."/>
            <person name="Frias D."/>
            <person name="Grangeiro T.B."/>
            <person name="Grisard E.C."/>
            <person name="Guimaraes C.T."/>
            <person name="Hungria M."/>
            <person name="Jardim S.N."/>
            <person name="Krieger M.A."/>
            <person name="Laurino J.P."/>
            <person name="Lima L.F.A."/>
            <person name="Lopes M.I."/>
            <person name="Loreto E.L.S."/>
            <person name="Madeira H.M.F."/>
            <person name="Manfio G.P."/>
            <person name="Maranhao A.Q."/>
            <person name="Martinkovics C.T."/>
            <person name="Medeiros S.R.B."/>
            <person name="Moreira M.A.M."/>
            <person name="Neiva M."/>
            <person name="Ramalho-Neto C.E."/>
            <person name="Nicolas M.F."/>
            <person name="Oliveira S.C."/>
            <person name="Paixao R.F.C."/>
            <person name="Pedrosa F.O."/>
            <person name="Pena S.D.J."/>
            <person name="Pereira M."/>
            <person name="Pereira-Ferrari L."/>
            <person name="Piffer I."/>
            <person name="Pinto L.S."/>
            <person name="Potrich D.P."/>
            <person name="Salim A.C.M."/>
            <person name="Santos F.R."/>
            <person name="Schmitt R."/>
            <person name="Schneider M.P.C."/>
            <person name="Schrank A."/>
            <person name="Schrank I.S."/>
            <person name="Schuck A.F."/>
            <person name="Seuanez H.N."/>
            <person name="Silva D.W."/>
            <person name="Silva R."/>
            <person name="Silva S.C."/>
            <person name="Soares C.M.A."/>
            <person name="Souza K.R.L."/>
            <person name="Souza R.C."/>
            <person name="Staats C.C."/>
            <person name="Steffens M.B.R."/>
            <person name="Teixeira S.M.R."/>
            <person name="Urmenyi T.P."/>
            <person name="Vainstein M.H."/>
            <person name="Zuccherato L.W."/>
            <person name="Simpson A.J.G."/>
            <person name="Zaha A."/>
        </authorList>
    </citation>
    <scope>NUCLEOTIDE SEQUENCE [LARGE SCALE GENOMIC DNA]</scope>
    <source>
        <strain>7448</strain>
    </source>
</reference>
<organism>
    <name type="scientific">Mesomycoplasma hyopneumoniae (strain 7448)</name>
    <name type="common">Mycoplasma hyopneumoniae</name>
    <dbReference type="NCBI Taxonomy" id="262722"/>
    <lineage>
        <taxon>Bacteria</taxon>
        <taxon>Bacillati</taxon>
        <taxon>Mycoplasmatota</taxon>
        <taxon>Mycoplasmoidales</taxon>
        <taxon>Metamycoplasmataceae</taxon>
        <taxon>Mesomycoplasma</taxon>
    </lineage>
</organism>
<proteinExistence type="inferred from homology"/>
<comment type="function">
    <text evidence="1">Catalyzes the reversible conversion of 2-phosphoglycerate (2-PG) into phosphoenolpyruvate (PEP). It is essential for the degradation of carbohydrates via glycolysis.</text>
</comment>
<comment type="catalytic activity">
    <reaction evidence="1">
        <text>(2R)-2-phosphoglycerate = phosphoenolpyruvate + H2O</text>
        <dbReference type="Rhea" id="RHEA:10164"/>
        <dbReference type="ChEBI" id="CHEBI:15377"/>
        <dbReference type="ChEBI" id="CHEBI:58289"/>
        <dbReference type="ChEBI" id="CHEBI:58702"/>
        <dbReference type="EC" id="4.2.1.11"/>
    </reaction>
</comment>
<comment type="cofactor">
    <cofactor evidence="1">
        <name>Mg(2+)</name>
        <dbReference type="ChEBI" id="CHEBI:18420"/>
    </cofactor>
    <text evidence="1">Binds a second Mg(2+) ion via substrate during catalysis.</text>
</comment>
<comment type="pathway">
    <text evidence="1">Carbohydrate degradation; glycolysis; pyruvate from D-glyceraldehyde 3-phosphate: step 4/5.</text>
</comment>
<comment type="subcellular location">
    <subcellularLocation>
        <location evidence="1">Cytoplasm</location>
    </subcellularLocation>
    <subcellularLocation>
        <location evidence="1">Secreted</location>
    </subcellularLocation>
    <subcellularLocation>
        <location evidence="1">Cell surface</location>
    </subcellularLocation>
    <text evidence="1">Fractions of enolase are present in both the cytoplasm and on the cell surface.</text>
</comment>
<comment type="similarity">
    <text evidence="1">Belongs to the enolase family.</text>
</comment>
<dbReference type="EC" id="4.2.1.11" evidence="1"/>
<dbReference type="EMBL" id="AE017244">
    <property type="protein sequence ID" value="AAZ53624.1"/>
    <property type="molecule type" value="Genomic_DNA"/>
</dbReference>
<dbReference type="RefSeq" id="WP_011290109.1">
    <property type="nucleotide sequence ID" value="NC_007332.1"/>
</dbReference>
<dbReference type="SMR" id="Q4A8B5"/>
<dbReference type="KEGG" id="mhp:MHP7448_0250"/>
<dbReference type="HOGENOM" id="CLU_031223_2_1_14"/>
<dbReference type="UniPathway" id="UPA00109">
    <property type="reaction ID" value="UER00187"/>
</dbReference>
<dbReference type="Proteomes" id="UP000000553">
    <property type="component" value="Chromosome"/>
</dbReference>
<dbReference type="GO" id="GO:0009986">
    <property type="term" value="C:cell surface"/>
    <property type="evidence" value="ECO:0007669"/>
    <property type="project" value="UniProtKB-SubCell"/>
</dbReference>
<dbReference type="GO" id="GO:0005576">
    <property type="term" value="C:extracellular region"/>
    <property type="evidence" value="ECO:0007669"/>
    <property type="project" value="UniProtKB-SubCell"/>
</dbReference>
<dbReference type="GO" id="GO:0000015">
    <property type="term" value="C:phosphopyruvate hydratase complex"/>
    <property type="evidence" value="ECO:0007669"/>
    <property type="project" value="InterPro"/>
</dbReference>
<dbReference type="GO" id="GO:0000287">
    <property type="term" value="F:magnesium ion binding"/>
    <property type="evidence" value="ECO:0007669"/>
    <property type="project" value="UniProtKB-UniRule"/>
</dbReference>
<dbReference type="GO" id="GO:0004634">
    <property type="term" value="F:phosphopyruvate hydratase activity"/>
    <property type="evidence" value="ECO:0007669"/>
    <property type="project" value="UniProtKB-UniRule"/>
</dbReference>
<dbReference type="GO" id="GO:0006096">
    <property type="term" value="P:glycolytic process"/>
    <property type="evidence" value="ECO:0007669"/>
    <property type="project" value="UniProtKB-UniRule"/>
</dbReference>
<dbReference type="CDD" id="cd03313">
    <property type="entry name" value="enolase"/>
    <property type="match status" value="1"/>
</dbReference>
<dbReference type="FunFam" id="3.30.390.10:FF:000001">
    <property type="entry name" value="Enolase"/>
    <property type="match status" value="1"/>
</dbReference>
<dbReference type="Gene3D" id="3.20.20.120">
    <property type="entry name" value="Enolase-like C-terminal domain"/>
    <property type="match status" value="1"/>
</dbReference>
<dbReference type="Gene3D" id="3.30.390.10">
    <property type="entry name" value="Enolase-like, N-terminal domain"/>
    <property type="match status" value="1"/>
</dbReference>
<dbReference type="HAMAP" id="MF_00318">
    <property type="entry name" value="Enolase"/>
    <property type="match status" value="1"/>
</dbReference>
<dbReference type="InterPro" id="IPR000941">
    <property type="entry name" value="Enolase"/>
</dbReference>
<dbReference type="InterPro" id="IPR036849">
    <property type="entry name" value="Enolase-like_C_sf"/>
</dbReference>
<dbReference type="InterPro" id="IPR029017">
    <property type="entry name" value="Enolase-like_N"/>
</dbReference>
<dbReference type="InterPro" id="IPR020810">
    <property type="entry name" value="Enolase_C"/>
</dbReference>
<dbReference type="InterPro" id="IPR020809">
    <property type="entry name" value="Enolase_CS"/>
</dbReference>
<dbReference type="InterPro" id="IPR020811">
    <property type="entry name" value="Enolase_N"/>
</dbReference>
<dbReference type="NCBIfam" id="TIGR01060">
    <property type="entry name" value="eno"/>
    <property type="match status" value="1"/>
</dbReference>
<dbReference type="PANTHER" id="PTHR11902">
    <property type="entry name" value="ENOLASE"/>
    <property type="match status" value="1"/>
</dbReference>
<dbReference type="PANTHER" id="PTHR11902:SF1">
    <property type="entry name" value="ENOLASE"/>
    <property type="match status" value="1"/>
</dbReference>
<dbReference type="Pfam" id="PF00113">
    <property type="entry name" value="Enolase_C"/>
    <property type="match status" value="1"/>
</dbReference>
<dbReference type="Pfam" id="PF03952">
    <property type="entry name" value="Enolase_N"/>
    <property type="match status" value="1"/>
</dbReference>
<dbReference type="PIRSF" id="PIRSF001400">
    <property type="entry name" value="Enolase"/>
    <property type="match status" value="1"/>
</dbReference>
<dbReference type="PRINTS" id="PR00148">
    <property type="entry name" value="ENOLASE"/>
</dbReference>
<dbReference type="SFLD" id="SFLDS00001">
    <property type="entry name" value="Enolase"/>
    <property type="match status" value="1"/>
</dbReference>
<dbReference type="SFLD" id="SFLDF00002">
    <property type="entry name" value="enolase"/>
    <property type="match status" value="1"/>
</dbReference>
<dbReference type="SMART" id="SM01192">
    <property type="entry name" value="Enolase_C"/>
    <property type="match status" value="1"/>
</dbReference>
<dbReference type="SMART" id="SM01193">
    <property type="entry name" value="Enolase_N"/>
    <property type="match status" value="1"/>
</dbReference>
<dbReference type="SUPFAM" id="SSF51604">
    <property type="entry name" value="Enolase C-terminal domain-like"/>
    <property type="match status" value="1"/>
</dbReference>
<dbReference type="SUPFAM" id="SSF54826">
    <property type="entry name" value="Enolase N-terminal domain-like"/>
    <property type="match status" value="1"/>
</dbReference>
<dbReference type="PROSITE" id="PS00164">
    <property type="entry name" value="ENOLASE"/>
    <property type="match status" value="1"/>
</dbReference>
<evidence type="ECO:0000255" key="1">
    <source>
        <dbReference type="HAMAP-Rule" id="MF_00318"/>
    </source>
</evidence>
<protein>
    <recommendedName>
        <fullName evidence="1">Enolase</fullName>
        <ecNumber evidence="1">4.2.1.11</ecNumber>
    </recommendedName>
    <alternativeName>
        <fullName evidence="1">2-phospho-D-glycerate hydro-lyase</fullName>
    </alternativeName>
    <alternativeName>
        <fullName evidence="1">2-phosphoglycerate dehydratase</fullName>
    </alternativeName>
</protein>
<sequence>MSKITKVFAREILDSRGNPTIQVDVYTLAGGFGSAIVPSGASTGSREALELRDTNTKYADNWYGQKGVMTAVDNVNNIIAPEIIGLCCKNQRLVDQKMIELDGTPNKEKLGANAILGVSLAVAKAAANELRMPLFRYLGGTNPTLMPVPMLNVINGGEHASNTLDFQEFMIMPLGFRTFKEALQAANKVFHNLAKLLKKSGFETQVGDEGGFAPNFNSHEQALDFLVDAIKESGFNPGFKGENAVAIAIDAAASDFYNGQKYVFKKLMAASLSKNQADLDEKFEFSSEELLNYYGQLLAKYPIISIEDGFAESDWQGFIAFNQKYGNNHQIVGDDLTVTNVEILKKAINLKAINSILIKLNQIGTLSETLDAIHLAQKSGMTAVISHRSGESEDTTIADLAVAVSSGQIKTGSLSRTDRIAKYNRLLVIEEYLNSYAKADYIGREVFYNLKK</sequence>
<accession>Q4A8B5</accession>
<gene>
    <name evidence="1" type="primary">eno</name>
    <name type="ordered locus">MHP7448_0250</name>
</gene>